<evidence type="ECO:0000255" key="1">
    <source>
        <dbReference type="HAMAP-Rule" id="MF_01398"/>
    </source>
</evidence>
<name>ATPF_SACEN</name>
<comment type="function">
    <text evidence="1">F(1)F(0) ATP synthase produces ATP from ADP in the presence of a proton or sodium gradient. F-type ATPases consist of two structural domains, F(1) containing the extramembraneous catalytic core and F(0) containing the membrane proton channel, linked together by a central stalk and a peripheral stalk. During catalysis, ATP synthesis in the catalytic domain of F(1) is coupled via a rotary mechanism of the central stalk subunits to proton translocation.</text>
</comment>
<comment type="function">
    <text evidence="1">Component of the F(0) channel, it forms part of the peripheral stalk, linking F(1) to F(0).</text>
</comment>
<comment type="subunit">
    <text evidence="1">F-type ATPases have 2 components, F(1) - the catalytic core - and F(0) - the membrane proton channel. F(1) has five subunits: alpha(3), beta(3), gamma(1), delta(1), epsilon(1). F(0) has three main subunits: a(1), b(2) and c(10-14). The alpha and beta chains form an alternating ring which encloses part of the gamma chain. F(1) is attached to F(0) by a central stalk formed by the gamma and epsilon chains, while a peripheral stalk is formed by the delta and b chains.</text>
</comment>
<comment type="subcellular location">
    <subcellularLocation>
        <location evidence="1">Cell membrane</location>
        <topology evidence="1">Single-pass membrane protein</topology>
    </subcellularLocation>
</comment>
<comment type="similarity">
    <text evidence="1">Belongs to the ATPase B chain family.</text>
</comment>
<organism>
    <name type="scientific">Saccharopolyspora erythraea (strain ATCC 11635 / DSM 40517 / JCM 4748 / NBRC 13426 / NCIMB 8594 / NRRL 2338)</name>
    <dbReference type="NCBI Taxonomy" id="405948"/>
    <lineage>
        <taxon>Bacteria</taxon>
        <taxon>Bacillati</taxon>
        <taxon>Actinomycetota</taxon>
        <taxon>Actinomycetes</taxon>
        <taxon>Pseudonocardiales</taxon>
        <taxon>Pseudonocardiaceae</taxon>
        <taxon>Saccharopolyspora</taxon>
    </lineage>
</organism>
<gene>
    <name evidence="1" type="primary">atpF</name>
    <name type="ordered locus">SACE_6284</name>
</gene>
<keyword id="KW-0066">ATP synthesis</keyword>
<keyword id="KW-1003">Cell membrane</keyword>
<keyword id="KW-0138">CF(0)</keyword>
<keyword id="KW-0375">Hydrogen ion transport</keyword>
<keyword id="KW-0406">Ion transport</keyword>
<keyword id="KW-0472">Membrane</keyword>
<keyword id="KW-1185">Reference proteome</keyword>
<keyword id="KW-0812">Transmembrane</keyword>
<keyword id="KW-1133">Transmembrane helix</keyword>
<keyword id="KW-0813">Transport</keyword>
<sequence length="178" mass="19492">MLAAEGGHNPIIPEPVEIVVGLVAFLLLLFVLWKYAVPRFEKVYEERSKRIEGGIEKAEAAQAEAQRTLEQYRSQLAEARAEAARIRDDARAEGQQIVEEMRAQAQAESERIVSAGQSALAAQRAQIVAELRADLGRQAVDLAGRVVGESLEDEARRRGTVDRFLDELEAASAPASKA</sequence>
<protein>
    <recommendedName>
        <fullName evidence="1">ATP synthase subunit b</fullName>
    </recommendedName>
    <alternativeName>
        <fullName evidence="1">ATP synthase F(0) sector subunit b</fullName>
    </alternativeName>
    <alternativeName>
        <fullName evidence="1">ATPase subunit I</fullName>
    </alternativeName>
    <alternativeName>
        <fullName evidence="1">F-type ATPase subunit b</fullName>
        <shortName evidence="1">F-ATPase subunit b</shortName>
    </alternativeName>
</protein>
<proteinExistence type="inferred from homology"/>
<feature type="chain" id="PRO_0000368735" description="ATP synthase subunit b">
    <location>
        <begin position="1"/>
        <end position="178"/>
    </location>
</feature>
<feature type="transmembrane region" description="Helical" evidence="1">
    <location>
        <begin position="11"/>
        <end position="31"/>
    </location>
</feature>
<reference key="1">
    <citation type="journal article" date="2007" name="Nat. Biotechnol.">
        <title>Complete genome sequence of the erythromycin-producing bacterium Saccharopolyspora erythraea NRRL23338.</title>
        <authorList>
            <person name="Oliynyk M."/>
            <person name="Samborskyy M."/>
            <person name="Lester J.B."/>
            <person name="Mironenko T."/>
            <person name="Scott N."/>
            <person name="Dickens S."/>
            <person name="Haydock S.F."/>
            <person name="Leadlay P.F."/>
        </authorList>
    </citation>
    <scope>NUCLEOTIDE SEQUENCE [LARGE SCALE GENOMIC DNA]</scope>
    <source>
        <strain>ATCC 11635 / DSM 40517 / JCM 4748 / NBRC 13426 / NCIMB 8594 / NRRL 2338</strain>
    </source>
</reference>
<accession>A4FN31</accession>
<dbReference type="EMBL" id="AM420293">
    <property type="protein sequence ID" value="CAM05456.1"/>
    <property type="molecule type" value="Genomic_DNA"/>
</dbReference>
<dbReference type="SMR" id="A4FN31"/>
<dbReference type="STRING" id="405948.SACE_6284"/>
<dbReference type="KEGG" id="sen:SACE_6284"/>
<dbReference type="eggNOG" id="COG0711">
    <property type="taxonomic scope" value="Bacteria"/>
</dbReference>
<dbReference type="HOGENOM" id="CLU_079215_5_2_11"/>
<dbReference type="OrthoDB" id="5243563at2"/>
<dbReference type="Proteomes" id="UP000006728">
    <property type="component" value="Chromosome"/>
</dbReference>
<dbReference type="GO" id="GO:0005886">
    <property type="term" value="C:plasma membrane"/>
    <property type="evidence" value="ECO:0007669"/>
    <property type="project" value="UniProtKB-SubCell"/>
</dbReference>
<dbReference type="GO" id="GO:0045259">
    <property type="term" value="C:proton-transporting ATP synthase complex"/>
    <property type="evidence" value="ECO:0007669"/>
    <property type="project" value="UniProtKB-KW"/>
</dbReference>
<dbReference type="GO" id="GO:0046933">
    <property type="term" value="F:proton-transporting ATP synthase activity, rotational mechanism"/>
    <property type="evidence" value="ECO:0007669"/>
    <property type="project" value="UniProtKB-UniRule"/>
</dbReference>
<dbReference type="GO" id="GO:0046961">
    <property type="term" value="F:proton-transporting ATPase activity, rotational mechanism"/>
    <property type="evidence" value="ECO:0007669"/>
    <property type="project" value="TreeGrafter"/>
</dbReference>
<dbReference type="CDD" id="cd06503">
    <property type="entry name" value="ATP-synt_Fo_b"/>
    <property type="match status" value="1"/>
</dbReference>
<dbReference type="Gene3D" id="1.20.5.620">
    <property type="entry name" value="F1F0 ATP synthase subunit B, membrane domain"/>
    <property type="match status" value="1"/>
</dbReference>
<dbReference type="HAMAP" id="MF_01398">
    <property type="entry name" value="ATP_synth_b_bprime"/>
    <property type="match status" value="1"/>
</dbReference>
<dbReference type="InterPro" id="IPR028987">
    <property type="entry name" value="ATP_synth_B-like_membr_sf"/>
</dbReference>
<dbReference type="InterPro" id="IPR002146">
    <property type="entry name" value="ATP_synth_b/b'su_bac/chlpt"/>
</dbReference>
<dbReference type="InterPro" id="IPR005864">
    <property type="entry name" value="ATP_synth_F0_bsu_bac"/>
</dbReference>
<dbReference type="InterPro" id="IPR050059">
    <property type="entry name" value="ATP_synthase_B_chain"/>
</dbReference>
<dbReference type="NCBIfam" id="TIGR01144">
    <property type="entry name" value="ATP_synt_b"/>
    <property type="match status" value="1"/>
</dbReference>
<dbReference type="NCBIfam" id="NF004412">
    <property type="entry name" value="PRK05759.1-3"/>
    <property type="match status" value="1"/>
</dbReference>
<dbReference type="PANTHER" id="PTHR33445:SF1">
    <property type="entry name" value="ATP SYNTHASE SUBUNIT B"/>
    <property type="match status" value="1"/>
</dbReference>
<dbReference type="PANTHER" id="PTHR33445">
    <property type="entry name" value="ATP SYNTHASE SUBUNIT B', CHLOROPLASTIC"/>
    <property type="match status" value="1"/>
</dbReference>
<dbReference type="Pfam" id="PF00430">
    <property type="entry name" value="ATP-synt_B"/>
    <property type="match status" value="1"/>
</dbReference>
<dbReference type="SUPFAM" id="SSF81573">
    <property type="entry name" value="F1F0 ATP synthase subunit B, membrane domain"/>
    <property type="match status" value="1"/>
</dbReference>